<evidence type="ECO:0000255" key="1">
    <source>
        <dbReference type="HAMAP-Rule" id="MF_00311"/>
    </source>
</evidence>
<evidence type="ECO:0000305" key="2"/>
<comment type="function">
    <text evidence="1">Produces ATP from ADP in the presence of a proton gradient across the membrane.</text>
</comment>
<comment type="similarity">
    <text evidence="1">Belongs to the V-ATPase E subunit family.</text>
</comment>
<comment type="sequence caution" evidence="2">
    <conflict type="erroneous initiation">
        <sequence resource="EMBL-CDS" id="CAL84187"/>
    </conflict>
</comment>
<organism>
    <name type="scientific">Clostridium botulinum (strain Hall / ATCC 3502 / NCTC 13319 / Type A)</name>
    <dbReference type="NCBI Taxonomy" id="441771"/>
    <lineage>
        <taxon>Bacteria</taxon>
        <taxon>Bacillati</taxon>
        <taxon>Bacillota</taxon>
        <taxon>Clostridia</taxon>
        <taxon>Eubacteriales</taxon>
        <taxon>Clostridiaceae</taxon>
        <taxon>Clostridium</taxon>
    </lineage>
</organism>
<name>VATE_CLOBH</name>
<keyword id="KW-0066">ATP synthesis</keyword>
<keyword id="KW-0375">Hydrogen ion transport</keyword>
<keyword id="KW-0406">Ion transport</keyword>
<keyword id="KW-1185">Reference proteome</keyword>
<keyword id="KW-0813">Transport</keyword>
<gene>
    <name evidence="1" type="primary">atpE</name>
    <name type="ordered locus">CBO2627</name>
    <name type="ordered locus">CLC_2501</name>
</gene>
<reference key="1">
    <citation type="journal article" date="2007" name="Genome Res.">
        <title>Genome sequence of a proteolytic (Group I) Clostridium botulinum strain Hall A and comparative analysis of the clostridial genomes.</title>
        <authorList>
            <person name="Sebaihia M."/>
            <person name="Peck M.W."/>
            <person name="Minton N.P."/>
            <person name="Thomson N.R."/>
            <person name="Holden M.T.G."/>
            <person name="Mitchell W.J."/>
            <person name="Carter A.T."/>
            <person name="Bentley S.D."/>
            <person name="Mason D.R."/>
            <person name="Crossman L."/>
            <person name="Paul C.J."/>
            <person name="Ivens A."/>
            <person name="Wells-Bennik M.H.J."/>
            <person name="Davis I.J."/>
            <person name="Cerdeno-Tarraga A.M."/>
            <person name="Churcher C."/>
            <person name="Quail M.A."/>
            <person name="Chillingworth T."/>
            <person name="Feltwell T."/>
            <person name="Fraser A."/>
            <person name="Goodhead I."/>
            <person name="Hance Z."/>
            <person name="Jagels K."/>
            <person name="Larke N."/>
            <person name="Maddison M."/>
            <person name="Moule S."/>
            <person name="Mungall K."/>
            <person name="Norbertczak H."/>
            <person name="Rabbinowitsch E."/>
            <person name="Sanders M."/>
            <person name="Simmonds M."/>
            <person name="White B."/>
            <person name="Whithead S."/>
            <person name="Parkhill J."/>
        </authorList>
    </citation>
    <scope>NUCLEOTIDE SEQUENCE [LARGE SCALE GENOMIC DNA]</scope>
    <source>
        <strain>Hall / ATCC 3502 / NCTC 13319 / Type A</strain>
    </source>
</reference>
<reference key="2">
    <citation type="journal article" date="2007" name="PLoS ONE">
        <title>Analysis of the neurotoxin complex genes in Clostridium botulinum A1-A4 and B1 strains: BoNT/A3, /Ba4 and /B1 clusters are located within plasmids.</title>
        <authorList>
            <person name="Smith T.J."/>
            <person name="Hill K.K."/>
            <person name="Foley B.T."/>
            <person name="Detter J.C."/>
            <person name="Munk A.C."/>
            <person name="Bruce D.C."/>
            <person name="Doggett N.A."/>
            <person name="Smith L.A."/>
            <person name="Marks J.D."/>
            <person name="Xie G."/>
            <person name="Brettin T.S."/>
        </authorList>
    </citation>
    <scope>NUCLEOTIDE SEQUENCE [LARGE SCALE GENOMIC DNA]</scope>
    <source>
        <strain>Hall / ATCC 3502 / NCTC 13319 / Type A</strain>
    </source>
</reference>
<protein>
    <recommendedName>
        <fullName>V-type ATP synthase subunit E</fullName>
    </recommendedName>
    <alternativeName>
        <fullName evidence="1">V-ATPase subunit E</fullName>
    </alternativeName>
</protein>
<dbReference type="EMBL" id="AM412317">
    <property type="protein sequence ID" value="CAL84187.1"/>
    <property type="status" value="ALT_INIT"/>
    <property type="molecule type" value="Genomic_DNA"/>
</dbReference>
<dbReference type="EMBL" id="CP000727">
    <property type="protein sequence ID" value="ABS37506.1"/>
    <property type="molecule type" value="Genomic_DNA"/>
</dbReference>
<dbReference type="RefSeq" id="WP_011986936.1">
    <property type="nucleotide sequence ID" value="NC_009698.1"/>
</dbReference>
<dbReference type="RefSeq" id="YP_001255125.1">
    <property type="nucleotide sequence ID" value="NC_009495.1"/>
</dbReference>
<dbReference type="RefSeq" id="YP_001388341.1">
    <property type="nucleotide sequence ID" value="NC_009698.1"/>
</dbReference>
<dbReference type="SMR" id="A5I560"/>
<dbReference type="GeneID" id="5186882"/>
<dbReference type="KEGG" id="cbh:CLC_2501"/>
<dbReference type="KEGG" id="cbo:CBO2627"/>
<dbReference type="PATRIC" id="fig|413999.7.peg.2610"/>
<dbReference type="HOGENOM" id="CLU_105846_0_0_9"/>
<dbReference type="PRO" id="PR:A5I560"/>
<dbReference type="Proteomes" id="UP000001986">
    <property type="component" value="Chromosome"/>
</dbReference>
<dbReference type="GO" id="GO:0033178">
    <property type="term" value="C:proton-transporting two-sector ATPase complex, catalytic domain"/>
    <property type="evidence" value="ECO:0007669"/>
    <property type="project" value="InterPro"/>
</dbReference>
<dbReference type="GO" id="GO:0005524">
    <property type="term" value="F:ATP binding"/>
    <property type="evidence" value="ECO:0007669"/>
    <property type="project" value="UniProtKB-UniRule"/>
</dbReference>
<dbReference type="GO" id="GO:0046933">
    <property type="term" value="F:proton-transporting ATP synthase activity, rotational mechanism"/>
    <property type="evidence" value="ECO:0007669"/>
    <property type="project" value="UniProtKB-UniRule"/>
</dbReference>
<dbReference type="GO" id="GO:0046961">
    <property type="term" value="F:proton-transporting ATPase activity, rotational mechanism"/>
    <property type="evidence" value="ECO:0007669"/>
    <property type="project" value="InterPro"/>
</dbReference>
<dbReference type="GO" id="GO:0042777">
    <property type="term" value="P:proton motive force-driven plasma membrane ATP synthesis"/>
    <property type="evidence" value="ECO:0007669"/>
    <property type="project" value="UniProtKB-UniRule"/>
</dbReference>
<dbReference type="CDD" id="cd06503">
    <property type="entry name" value="ATP-synt_Fo_b"/>
    <property type="match status" value="1"/>
</dbReference>
<dbReference type="Gene3D" id="3.30.2320.30">
    <property type="entry name" value="ATP synthase, E subunit, C-terminal"/>
    <property type="match status" value="1"/>
</dbReference>
<dbReference type="Gene3D" id="1.20.5.620">
    <property type="entry name" value="F1F0 ATP synthase subunit B, membrane domain"/>
    <property type="match status" value="1"/>
</dbReference>
<dbReference type="HAMAP" id="MF_00311">
    <property type="entry name" value="ATP_synth_E_arch"/>
    <property type="match status" value="1"/>
</dbReference>
<dbReference type="InterPro" id="IPR038495">
    <property type="entry name" value="ATPase_E_C"/>
</dbReference>
<dbReference type="InterPro" id="IPR002842">
    <property type="entry name" value="ATPase_V1_Esu"/>
</dbReference>
<dbReference type="Pfam" id="PF01991">
    <property type="entry name" value="vATP-synt_E"/>
    <property type="match status" value="1"/>
</dbReference>
<dbReference type="SUPFAM" id="SSF160527">
    <property type="entry name" value="V-type ATPase subunit E-like"/>
    <property type="match status" value="1"/>
</dbReference>
<proteinExistence type="inferred from homology"/>
<accession>A5I560</accession>
<accession>A7G6C6</accession>
<sequence>MSNLENLTSKIIEDANKEAEELLSEAKKEENKIVDEKVKKGNKAKEQIIEKSKREAKTKAERIISNTHLKIRNNKLEAKQEMINKVFDEAVIKLQNLSKDEYLDFVKSSILSLDIEGDEEIIISPNDKDKMDVNFMLTLNNKLKAKGKKGLLKISNENRNIKGGFILYKNGIEINNSFEALVDSLRDELEQEIIEALFS</sequence>
<feature type="chain" id="PRO_0000322512" description="V-type ATP synthase subunit E">
    <location>
        <begin position="1"/>
        <end position="199"/>
    </location>
</feature>